<gene>
    <name evidence="1" type="primary">ubiB</name>
    <name type="ordered locus">PFL_0425</name>
</gene>
<feature type="chain" id="PRO_1000050050" description="Probable protein kinase UbiB">
    <location>
        <begin position="1"/>
        <end position="534"/>
    </location>
</feature>
<feature type="transmembrane region" description="Helical" evidence="1">
    <location>
        <begin position="23"/>
        <end position="43"/>
    </location>
</feature>
<feature type="transmembrane region" description="Helical" evidence="1">
    <location>
        <begin position="490"/>
        <end position="510"/>
    </location>
</feature>
<feature type="transmembrane region" description="Helical" evidence="1">
    <location>
        <begin position="512"/>
        <end position="532"/>
    </location>
</feature>
<feature type="domain" description="Protein kinase" evidence="1">
    <location>
        <begin position="125"/>
        <end position="492"/>
    </location>
</feature>
<feature type="active site" description="Proton acceptor" evidence="1">
    <location>
        <position position="288"/>
    </location>
</feature>
<feature type="binding site" evidence="1">
    <location>
        <begin position="131"/>
        <end position="139"/>
    </location>
    <ligand>
        <name>ATP</name>
        <dbReference type="ChEBI" id="CHEBI:30616"/>
    </ligand>
</feature>
<feature type="binding site" evidence="1">
    <location>
        <position position="153"/>
    </location>
    <ligand>
        <name>ATP</name>
        <dbReference type="ChEBI" id="CHEBI:30616"/>
    </ligand>
</feature>
<keyword id="KW-0067">ATP-binding</keyword>
<keyword id="KW-0997">Cell inner membrane</keyword>
<keyword id="KW-1003">Cell membrane</keyword>
<keyword id="KW-0418">Kinase</keyword>
<keyword id="KW-0472">Membrane</keyword>
<keyword id="KW-0547">Nucleotide-binding</keyword>
<keyword id="KW-0808">Transferase</keyword>
<keyword id="KW-0812">Transmembrane</keyword>
<keyword id="KW-1133">Transmembrane helix</keyword>
<keyword id="KW-0831">Ubiquinone biosynthesis</keyword>
<evidence type="ECO:0000255" key="1">
    <source>
        <dbReference type="HAMAP-Rule" id="MF_00414"/>
    </source>
</evidence>
<comment type="function">
    <text evidence="1">Is probably a protein kinase regulator of UbiI activity which is involved in aerobic coenzyme Q (ubiquinone) biosynthesis.</text>
</comment>
<comment type="pathway">
    <text>Cofactor biosynthesis; ubiquinone biosynthesis [regulation].</text>
</comment>
<comment type="subcellular location">
    <subcellularLocation>
        <location evidence="1">Cell inner membrane</location>
        <topology evidence="1">Multi-pass membrane protein</topology>
    </subcellularLocation>
</comment>
<comment type="similarity">
    <text evidence="1">Belongs to the ABC1 family. UbiB subfamily.</text>
</comment>
<proteinExistence type="inferred from homology"/>
<name>UBIB_PSEF5</name>
<organism>
    <name type="scientific">Pseudomonas fluorescens (strain ATCC BAA-477 / NRRL B-23932 / Pf-5)</name>
    <dbReference type="NCBI Taxonomy" id="220664"/>
    <lineage>
        <taxon>Bacteria</taxon>
        <taxon>Pseudomonadati</taxon>
        <taxon>Pseudomonadota</taxon>
        <taxon>Gammaproteobacteria</taxon>
        <taxon>Pseudomonadales</taxon>
        <taxon>Pseudomonadaceae</taxon>
        <taxon>Pseudomonas</taxon>
    </lineage>
</organism>
<accession>Q4KJL4</accession>
<reference key="1">
    <citation type="journal article" date="2005" name="Nat. Biotechnol.">
        <title>Complete genome sequence of the plant commensal Pseudomonas fluorescens Pf-5.</title>
        <authorList>
            <person name="Paulsen I.T."/>
            <person name="Press C.M."/>
            <person name="Ravel J."/>
            <person name="Kobayashi D.Y."/>
            <person name="Myers G.S.A."/>
            <person name="Mavrodi D.V."/>
            <person name="DeBoy R.T."/>
            <person name="Seshadri R."/>
            <person name="Ren Q."/>
            <person name="Madupu R."/>
            <person name="Dodson R.J."/>
            <person name="Durkin A.S."/>
            <person name="Brinkac L.M."/>
            <person name="Daugherty S.C."/>
            <person name="Sullivan S.A."/>
            <person name="Rosovitz M.J."/>
            <person name="Gwinn M.L."/>
            <person name="Zhou L."/>
            <person name="Schneider D.J."/>
            <person name="Cartinhour S.W."/>
            <person name="Nelson W.C."/>
            <person name="Weidman J."/>
            <person name="Watkins K."/>
            <person name="Tran K."/>
            <person name="Khouri H."/>
            <person name="Pierson E.A."/>
            <person name="Pierson L.S. III"/>
            <person name="Thomashow L.S."/>
            <person name="Loper J.E."/>
        </authorList>
    </citation>
    <scope>NUCLEOTIDE SEQUENCE [LARGE SCALE GENOMIC DNA]</scope>
    <source>
        <strain>ATCC BAA-477 / NRRL B-23932 / Pf-5</strain>
    </source>
</reference>
<protein>
    <recommendedName>
        <fullName evidence="1">Probable protein kinase UbiB</fullName>
        <ecNumber evidence="1">2.7.-.-</ecNumber>
    </recommendedName>
    <alternativeName>
        <fullName evidence="1">Ubiquinone biosynthesis protein UbiB</fullName>
    </alternativeName>
</protein>
<dbReference type="EC" id="2.7.-.-" evidence="1"/>
<dbReference type="EMBL" id="CP000076">
    <property type="protein sequence ID" value="AAY95834.1"/>
    <property type="molecule type" value="Genomic_DNA"/>
</dbReference>
<dbReference type="RefSeq" id="WP_011058800.1">
    <property type="nucleotide sequence ID" value="NC_004129.6"/>
</dbReference>
<dbReference type="SMR" id="Q4KJL4"/>
<dbReference type="STRING" id="220664.PFL_0425"/>
<dbReference type="GeneID" id="57473414"/>
<dbReference type="KEGG" id="pfl:PFL_0425"/>
<dbReference type="PATRIC" id="fig|220664.5.peg.434"/>
<dbReference type="eggNOG" id="COG0661">
    <property type="taxonomic scope" value="Bacteria"/>
</dbReference>
<dbReference type="HOGENOM" id="CLU_006533_0_0_6"/>
<dbReference type="UniPathway" id="UPA00232"/>
<dbReference type="Proteomes" id="UP000008540">
    <property type="component" value="Chromosome"/>
</dbReference>
<dbReference type="GO" id="GO:0005886">
    <property type="term" value="C:plasma membrane"/>
    <property type="evidence" value="ECO:0007669"/>
    <property type="project" value="UniProtKB-SubCell"/>
</dbReference>
<dbReference type="GO" id="GO:0005524">
    <property type="term" value="F:ATP binding"/>
    <property type="evidence" value="ECO:0007669"/>
    <property type="project" value="UniProtKB-KW"/>
</dbReference>
<dbReference type="GO" id="GO:0004672">
    <property type="term" value="F:protein kinase activity"/>
    <property type="evidence" value="ECO:0007669"/>
    <property type="project" value="UniProtKB-UniRule"/>
</dbReference>
<dbReference type="GO" id="GO:0010795">
    <property type="term" value="P:regulation of ubiquinone biosynthetic process"/>
    <property type="evidence" value="ECO:0007669"/>
    <property type="project" value="UniProtKB-UniRule"/>
</dbReference>
<dbReference type="GO" id="GO:0006744">
    <property type="term" value="P:ubiquinone biosynthetic process"/>
    <property type="evidence" value="ECO:0007669"/>
    <property type="project" value="UniProtKB-UniPathway"/>
</dbReference>
<dbReference type="CDD" id="cd13972">
    <property type="entry name" value="UbiB"/>
    <property type="match status" value="1"/>
</dbReference>
<dbReference type="HAMAP" id="MF_00414">
    <property type="entry name" value="UbiB"/>
    <property type="match status" value="1"/>
</dbReference>
<dbReference type="InterPro" id="IPR004147">
    <property type="entry name" value="ABC1_dom"/>
</dbReference>
<dbReference type="InterPro" id="IPR011009">
    <property type="entry name" value="Kinase-like_dom_sf"/>
</dbReference>
<dbReference type="InterPro" id="IPR010232">
    <property type="entry name" value="UbiB"/>
</dbReference>
<dbReference type="InterPro" id="IPR045308">
    <property type="entry name" value="UbiB_bact"/>
</dbReference>
<dbReference type="InterPro" id="IPR050154">
    <property type="entry name" value="UbiB_kinase"/>
</dbReference>
<dbReference type="NCBIfam" id="NF003404">
    <property type="entry name" value="PRK04750.1"/>
    <property type="match status" value="1"/>
</dbReference>
<dbReference type="NCBIfam" id="TIGR01982">
    <property type="entry name" value="UbiB"/>
    <property type="match status" value="1"/>
</dbReference>
<dbReference type="PANTHER" id="PTHR10566">
    <property type="entry name" value="CHAPERONE-ACTIVITY OF BC1 COMPLEX CABC1 -RELATED"/>
    <property type="match status" value="1"/>
</dbReference>
<dbReference type="PANTHER" id="PTHR10566:SF113">
    <property type="entry name" value="PROTEIN ACTIVITY OF BC1 COMPLEX KINASE 7, CHLOROPLASTIC"/>
    <property type="match status" value="1"/>
</dbReference>
<dbReference type="Pfam" id="PF03109">
    <property type="entry name" value="ABC1"/>
    <property type="match status" value="1"/>
</dbReference>
<dbReference type="SUPFAM" id="SSF56112">
    <property type="entry name" value="Protein kinase-like (PK-like)"/>
    <property type="match status" value="1"/>
</dbReference>
<sequence length="534" mass="61263">MKLLAVRRLLRIQRVVIRYRLDDLLFDLPLPWFLLALRFALPWRWFPRKPLDLSRGARLRLALQDLGPIFIKFGQILSTRRDLLPEDIADELMLLQDRVPPFDSQKSVALIEAQLGKKISDVFSRFDIEPLASASVAQVHAAKLKTGEEVVVKVIRPGLKPIIAQDLAWLFILARAAEKLSADARLLHPVDVVSDYEKTIYDELDLLREAANASQLKRNFEGSPLLYVPQVYWDWCRPKVLVMERIYGIQVTDLATLADQRTDMKMLAERGVEIFFTQVFRDSFFHADMHPGNIFVSTVQPWSPQYIAIDCGIVGSLTPEDQDYLARNLFAFFKRDYRRVAQLHIDSGWVPAETKLNEFEAAIRTVCEPIFEKPLKDISFGQVLMRLFQTARRFNMEVQPQLVLLQKTLLNIEGLGRQLYPDLDLWNTAQPFLERWMRERVSPKAVLGNIHSQIEQLPHLANMTRDLLERMSQPHAADPPAPWHKRKDDWFLRLLGTAHLGGGAVLAAGGPLHELGHWPAGIMIAVGLYLIVRR</sequence>